<evidence type="ECO:0000255" key="1">
    <source>
        <dbReference type="HAMAP-Rule" id="MF_00016"/>
    </source>
</evidence>
<comment type="function">
    <text evidence="1">The RuvA-RuvB-RuvC complex processes Holliday junction (HJ) DNA during genetic recombination and DNA repair, while the RuvA-RuvB complex plays an important role in the rescue of blocked DNA replication forks via replication fork reversal (RFR). RuvA specifically binds to HJ cruciform DNA, conferring on it an open structure. The RuvB hexamer acts as an ATP-dependent pump, pulling dsDNA into and through the RuvAB complex. RuvB forms 2 homohexamers on either side of HJ DNA bound by 1 or 2 RuvA tetramers; 4 subunits per hexamer contact DNA at a time. Coordinated motions by a converter formed by DNA-disengaged RuvB subunits stimulates ATP hydrolysis and nucleotide exchange. Immobilization of the converter enables RuvB to convert the ATP-contained energy into a lever motion, pulling 2 nucleotides of DNA out of the RuvA tetramer per ATP hydrolyzed, thus driving DNA branch migration. The RuvB motors rotate together with the DNA substrate, which together with the progressing nucleotide cycle form the mechanistic basis for DNA recombination by continuous HJ branch migration. Branch migration allows RuvC to scan DNA until it finds its consensus sequence, where it cleaves and resolves cruciform DNA.</text>
</comment>
<comment type="catalytic activity">
    <reaction evidence="1">
        <text>ATP + H2O = ADP + phosphate + H(+)</text>
        <dbReference type="Rhea" id="RHEA:13065"/>
        <dbReference type="ChEBI" id="CHEBI:15377"/>
        <dbReference type="ChEBI" id="CHEBI:15378"/>
        <dbReference type="ChEBI" id="CHEBI:30616"/>
        <dbReference type="ChEBI" id="CHEBI:43474"/>
        <dbReference type="ChEBI" id="CHEBI:456216"/>
    </reaction>
</comment>
<comment type="subunit">
    <text evidence="1">Homohexamer. Forms an RuvA(8)-RuvB(12)-Holliday junction (HJ) complex. HJ DNA is sandwiched between 2 RuvA tetramers; dsDNA enters through RuvA and exits via RuvB. An RuvB hexamer assembles on each DNA strand where it exits the tetramer. Each RuvB hexamer is contacted by two RuvA subunits (via domain III) on 2 adjacent RuvB subunits; this complex drives branch migration. In the full resolvosome a probable DNA-RuvA(4)-RuvB(12)-RuvC(2) complex forms which resolves the HJ.</text>
</comment>
<comment type="subcellular location">
    <subcellularLocation>
        <location evidence="1">Cytoplasm</location>
    </subcellularLocation>
</comment>
<comment type="domain">
    <text evidence="1">Has 3 domains, the large (RuvB-L) and small ATPase (RuvB-S) domains and the C-terminal head (RuvB-H) domain. The head domain binds DNA, while the ATPase domains jointly bind ATP, ADP or are empty depending on the state of the subunit in the translocation cycle. During a single DNA translocation step the structure of each domain remains the same, but their relative positions change.</text>
</comment>
<comment type="similarity">
    <text evidence="1">Belongs to the RuvB family.</text>
</comment>
<dbReference type="EC" id="3.6.4.-" evidence="1"/>
<dbReference type="EMBL" id="BA000043">
    <property type="protein sequence ID" value="BAD76876.1"/>
    <property type="molecule type" value="Genomic_DNA"/>
</dbReference>
<dbReference type="RefSeq" id="WP_011232067.1">
    <property type="nucleotide sequence ID" value="NC_006510.1"/>
</dbReference>
<dbReference type="SMR" id="Q5KWR0"/>
<dbReference type="STRING" id="235909.GK2591"/>
<dbReference type="GeneID" id="32064493"/>
<dbReference type="KEGG" id="gka:GK2591"/>
<dbReference type="eggNOG" id="COG2255">
    <property type="taxonomic scope" value="Bacteria"/>
</dbReference>
<dbReference type="HOGENOM" id="CLU_055599_1_0_9"/>
<dbReference type="Proteomes" id="UP000001172">
    <property type="component" value="Chromosome"/>
</dbReference>
<dbReference type="GO" id="GO:0005737">
    <property type="term" value="C:cytoplasm"/>
    <property type="evidence" value="ECO:0007669"/>
    <property type="project" value="UniProtKB-SubCell"/>
</dbReference>
<dbReference type="GO" id="GO:0048476">
    <property type="term" value="C:Holliday junction resolvase complex"/>
    <property type="evidence" value="ECO:0007669"/>
    <property type="project" value="UniProtKB-UniRule"/>
</dbReference>
<dbReference type="GO" id="GO:0005524">
    <property type="term" value="F:ATP binding"/>
    <property type="evidence" value="ECO:0007669"/>
    <property type="project" value="UniProtKB-UniRule"/>
</dbReference>
<dbReference type="GO" id="GO:0016887">
    <property type="term" value="F:ATP hydrolysis activity"/>
    <property type="evidence" value="ECO:0007669"/>
    <property type="project" value="InterPro"/>
</dbReference>
<dbReference type="GO" id="GO:0000400">
    <property type="term" value="F:four-way junction DNA binding"/>
    <property type="evidence" value="ECO:0007669"/>
    <property type="project" value="UniProtKB-UniRule"/>
</dbReference>
<dbReference type="GO" id="GO:0009378">
    <property type="term" value="F:four-way junction helicase activity"/>
    <property type="evidence" value="ECO:0007669"/>
    <property type="project" value="InterPro"/>
</dbReference>
<dbReference type="GO" id="GO:0006310">
    <property type="term" value="P:DNA recombination"/>
    <property type="evidence" value="ECO:0007669"/>
    <property type="project" value="UniProtKB-UniRule"/>
</dbReference>
<dbReference type="GO" id="GO:0006281">
    <property type="term" value="P:DNA repair"/>
    <property type="evidence" value="ECO:0007669"/>
    <property type="project" value="UniProtKB-UniRule"/>
</dbReference>
<dbReference type="CDD" id="cd00009">
    <property type="entry name" value="AAA"/>
    <property type="match status" value="1"/>
</dbReference>
<dbReference type="Gene3D" id="1.10.8.60">
    <property type="match status" value="1"/>
</dbReference>
<dbReference type="Gene3D" id="3.40.50.300">
    <property type="entry name" value="P-loop containing nucleotide triphosphate hydrolases"/>
    <property type="match status" value="1"/>
</dbReference>
<dbReference type="Gene3D" id="1.10.10.10">
    <property type="entry name" value="Winged helix-like DNA-binding domain superfamily/Winged helix DNA-binding domain"/>
    <property type="match status" value="1"/>
</dbReference>
<dbReference type="HAMAP" id="MF_00016">
    <property type="entry name" value="DNA_HJ_migration_RuvB"/>
    <property type="match status" value="1"/>
</dbReference>
<dbReference type="InterPro" id="IPR003593">
    <property type="entry name" value="AAA+_ATPase"/>
</dbReference>
<dbReference type="InterPro" id="IPR041445">
    <property type="entry name" value="AAA_lid_4"/>
</dbReference>
<dbReference type="InterPro" id="IPR004605">
    <property type="entry name" value="DNA_helicase_Holl-junc_RuvB"/>
</dbReference>
<dbReference type="InterPro" id="IPR027417">
    <property type="entry name" value="P-loop_NTPase"/>
</dbReference>
<dbReference type="InterPro" id="IPR008824">
    <property type="entry name" value="RuvB-like_N"/>
</dbReference>
<dbReference type="InterPro" id="IPR008823">
    <property type="entry name" value="RuvB_C"/>
</dbReference>
<dbReference type="InterPro" id="IPR036388">
    <property type="entry name" value="WH-like_DNA-bd_sf"/>
</dbReference>
<dbReference type="InterPro" id="IPR036390">
    <property type="entry name" value="WH_DNA-bd_sf"/>
</dbReference>
<dbReference type="NCBIfam" id="NF000868">
    <property type="entry name" value="PRK00080.1"/>
    <property type="match status" value="1"/>
</dbReference>
<dbReference type="NCBIfam" id="TIGR00635">
    <property type="entry name" value="ruvB"/>
    <property type="match status" value="1"/>
</dbReference>
<dbReference type="PANTHER" id="PTHR42848">
    <property type="match status" value="1"/>
</dbReference>
<dbReference type="PANTHER" id="PTHR42848:SF1">
    <property type="entry name" value="HOLLIDAY JUNCTION BRANCH MIGRATION COMPLEX SUBUNIT RUVB"/>
    <property type="match status" value="1"/>
</dbReference>
<dbReference type="Pfam" id="PF17864">
    <property type="entry name" value="AAA_lid_4"/>
    <property type="match status" value="1"/>
</dbReference>
<dbReference type="Pfam" id="PF05491">
    <property type="entry name" value="RuvB_C"/>
    <property type="match status" value="1"/>
</dbReference>
<dbReference type="Pfam" id="PF05496">
    <property type="entry name" value="RuvB_N"/>
    <property type="match status" value="1"/>
</dbReference>
<dbReference type="SMART" id="SM00382">
    <property type="entry name" value="AAA"/>
    <property type="match status" value="1"/>
</dbReference>
<dbReference type="SUPFAM" id="SSF52540">
    <property type="entry name" value="P-loop containing nucleoside triphosphate hydrolases"/>
    <property type="match status" value="1"/>
</dbReference>
<dbReference type="SUPFAM" id="SSF46785">
    <property type="entry name" value="Winged helix' DNA-binding domain"/>
    <property type="match status" value="1"/>
</dbReference>
<organism>
    <name type="scientific">Geobacillus kaustophilus (strain HTA426)</name>
    <dbReference type="NCBI Taxonomy" id="235909"/>
    <lineage>
        <taxon>Bacteria</taxon>
        <taxon>Bacillati</taxon>
        <taxon>Bacillota</taxon>
        <taxon>Bacilli</taxon>
        <taxon>Bacillales</taxon>
        <taxon>Anoxybacillaceae</taxon>
        <taxon>Geobacillus</taxon>
        <taxon>Geobacillus thermoleovorans group</taxon>
    </lineage>
</organism>
<protein>
    <recommendedName>
        <fullName evidence="1">Holliday junction branch migration complex subunit RuvB</fullName>
        <ecNumber evidence="1">3.6.4.-</ecNumber>
    </recommendedName>
</protein>
<sequence>MEERLVSGEVLGEETALEPSLRPQYLHEYIGQDKIKENLKVFIEAAKLREETLDHVLLYGPPGLGKTTLAVIIANEMGVKLRATSGPALERPGDLAALLTSLEPGDVLFIDEIHRLPRAVEEVLYPAMEDYCLDITIGKGPDARTLRLDLPPFTLVGATTRAGALSAPLRDRFGVISRLEYYHVDQLAQIIERAAAILQIGIEREAALELARRARGTPRIANRLLRRVRDFAQVRGEGGITLPLAVEALERLQVDRLGLDQIDHKLLSAMIEKFAGGPVGLETLAAVIGEEAQTIEEVYEPYLMQIGLLQRTPRGRVVTPAAYTHLGMEVPKR</sequence>
<feature type="chain" id="PRO_0000235370" description="Holliday junction branch migration complex subunit RuvB">
    <location>
        <begin position="1"/>
        <end position="333"/>
    </location>
</feature>
<feature type="region of interest" description="Large ATPase domain (RuvB-L)" evidence="1">
    <location>
        <begin position="1"/>
        <end position="182"/>
    </location>
</feature>
<feature type="region of interest" description="Small ATPAse domain (RuvB-S)" evidence="1">
    <location>
        <begin position="183"/>
        <end position="253"/>
    </location>
</feature>
<feature type="region of interest" description="Head domain (RuvB-H)" evidence="1">
    <location>
        <begin position="256"/>
        <end position="333"/>
    </location>
</feature>
<feature type="binding site" evidence="1">
    <location>
        <position position="21"/>
    </location>
    <ligand>
        <name>ATP</name>
        <dbReference type="ChEBI" id="CHEBI:30616"/>
    </ligand>
</feature>
<feature type="binding site" evidence="1">
    <location>
        <position position="22"/>
    </location>
    <ligand>
        <name>ATP</name>
        <dbReference type="ChEBI" id="CHEBI:30616"/>
    </ligand>
</feature>
<feature type="binding site" evidence="1">
    <location>
        <position position="63"/>
    </location>
    <ligand>
        <name>ATP</name>
        <dbReference type="ChEBI" id="CHEBI:30616"/>
    </ligand>
</feature>
<feature type="binding site" evidence="1">
    <location>
        <position position="66"/>
    </location>
    <ligand>
        <name>ATP</name>
        <dbReference type="ChEBI" id="CHEBI:30616"/>
    </ligand>
</feature>
<feature type="binding site" evidence="1">
    <location>
        <position position="67"/>
    </location>
    <ligand>
        <name>ATP</name>
        <dbReference type="ChEBI" id="CHEBI:30616"/>
    </ligand>
</feature>
<feature type="binding site" evidence="1">
    <location>
        <position position="67"/>
    </location>
    <ligand>
        <name>Mg(2+)</name>
        <dbReference type="ChEBI" id="CHEBI:18420"/>
    </ligand>
</feature>
<feature type="binding site" evidence="1">
    <location>
        <position position="68"/>
    </location>
    <ligand>
        <name>ATP</name>
        <dbReference type="ChEBI" id="CHEBI:30616"/>
    </ligand>
</feature>
<feature type="binding site" evidence="1">
    <location>
        <begin position="129"/>
        <end position="131"/>
    </location>
    <ligand>
        <name>ATP</name>
        <dbReference type="ChEBI" id="CHEBI:30616"/>
    </ligand>
</feature>
<feature type="binding site" evidence="1">
    <location>
        <position position="172"/>
    </location>
    <ligand>
        <name>ATP</name>
        <dbReference type="ChEBI" id="CHEBI:30616"/>
    </ligand>
</feature>
<feature type="binding site" evidence="1">
    <location>
        <position position="182"/>
    </location>
    <ligand>
        <name>ATP</name>
        <dbReference type="ChEBI" id="CHEBI:30616"/>
    </ligand>
</feature>
<feature type="binding site" evidence="1">
    <location>
        <position position="219"/>
    </location>
    <ligand>
        <name>ATP</name>
        <dbReference type="ChEBI" id="CHEBI:30616"/>
    </ligand>
</feature>
<feature type="binding site" evidence="1">
    <location>
        <position position="311"/>
    </location>
    <ligand>
        <name>DNA</name>
        <dbReference type="ChEBI" id="CHEBI:16991"/>
    </ligand>
</feature>
<feature type="binding site" evidence="1">
    <location>
        <position position="316"/>
    </location>
    <ligand>
        <name>DNA</name>
        <dbReference type="ChEBI" id="CHEBI:16991"/>
    </ligand>
</feature>
<reference key="1">
    <citation type="journal article" date="2004" name="Nucleic Acids Res.">
        <title>Thermoadaptation trait revealed by the genome sequence of thermophilic Geobacillus kaustophilus.</title>
        <authorList>
            <person name="Takami H."/>
            <person name="Takaki Y."/>
            <person name="Chee G.-J."/>
            <person name="Nishi S."/>
            <person name="Shimamura S."/>
            <person name="Suzuki H."/>
            <person name="Matsui S."/>
            <person name="Uchiyama I."/>
        </authorList>
    </citation>
    <scope>NUCLEOTIDE SEQUENCE [LARGE SCALE GENOMIC DNA]</scope>
    <source>
        <strain>HTA426</strain>
    </source>
</reference>
<accession>Q5KWR0</accession>
<proteinExistence type="inferred from homology"/>
<keyword id="KW-0067">ATP-binding</keyword>
<keyword id="KW-0963">Cytoplasm</keyword>
<keyword id="KW-0227">DNA damage</keyword>
<keyword id="KW-0233">DNA recombination</keyword>
<keyword id="KW-0234">DNA repair</keyword>
<keyword id="KW-0238">DNA-binding</keyword>
<keyword id="KW-0378">Hydrolase</keyword>
<keyword id="KW-0547">Nucleotide-binding</keyword>
<keyword id="KW-1185">Reference proteome</keyword>
<name>RUVB_GEOKA</name>
<gene>
    <name evidence="1" type="primary">ruvB</name>
    <name type="ordered locus">GK2591</name>
</gene>